<accession>P08325</accession>
<protein>
    <recommendedName>
        <fullName>Matrix protein</fullName>
    </recommendedName>
</protein>
<gene>
    <name type="primary">M</name>
</gene>
<organismHost>
    <name type="scientific">Aedes</name>
    <dbReference type="NCBI Taxonomy" id="7158"/>
</organismHost>
<organismHost>
    <name type="scientific">Bos taurus</name>
    <name type="common">Bovine</name>
    <dbReference type="NCBI Taxonomy" id="9913"/>
</organismHost>
<organismHost>
    <name type="scientific">Culicoides</name>
    <dbReference type="NCBI Taxonomy" id="58271"/>
</organismHost>
<organismHost>
    <name type="scientific">Equus asinus</name>
    <name type="common">Donkey</name>
    <name type="synonym">Equus africanus asinus</name>
    <dbReference type="NCBI Taxonomy" id="9793"/>
</organismHost>
<organismHost>
    <name type="scientific">Equus caballus</name>
    <name type="common">Horse</name>
    <dbReference type="NCBI Taxonomy" id="9796"/>
</organismHost>
<organismHost>
    <name type="scientific">Homo sapiens</name>
    <name type="common">Human</name>
    <dbReference type="NCBI Taxonomy" id="9606"/>
</organismHost>
<organismHost>
    <name type="scientific">Lutzomyia</name>
    <dbReference type="NCBI Taxonomy" id="252607"/>
</organismHost>
<organismHost>
    <name type="scientific">Musca domestica</name>
    <name type="common">House fly</name>
    <dbReference type="NCBI Taxonomy" id="7370"/>
</organismHost>
<organismHost>
    <name type="scientific">Simuliidae</name>
    <name type="common">black flies</name>
    <dbReference type="NCBI Taxonomy" id="7190"/>
</organismHost>
<organismHost>
    <name type="scientific">Sus scrofa</name>
    <name type="common">Pig</name>
    <dbReference type="NCBI Taxonomy" id="9823"/>
</organismHost>
<comment type="function">
    <text evidence="1 4 6">Forms a double layer around the helical nucleocapsid, the inner matrix layer binding to the N helix and the outer matrix layer binding to the envelope glycoprotein (PubMed:36216930). Plays a major role in assembly and budding of virion, by recruiting cellular partners of the ESCRT complexes that play a key role in releasing the budding particle from the host membrane (Probable). Condensates the ribonucleocapsid core during virus assembly (PubMed:36216930). Inhibits the host mRNA nuclear export thereby inducing the shut off of cellular transcription and preventing the interferon signaling and the establishment of antiviral state in infected cells (By similarity). This shutoff presumably inhibits interferon signaling and thus establishment of antiviral state in virus infected cells (By similarity). Induces cell-rounding, cytoskeleton disorganization and apoptosis in infected cell (By similarity). Inhibits host transcription, possibly through interaction with host DNA repair factor IIH/TFIIH GTF2H5 subunit (By similarity).</text>
</comment>
<comment type="subunit">
    <text evidence="1 4 6">Homomultimer (PubMed:36216930). Interacts with viral nucleocapsid; this interaction contributes to the virion assembly (PubMed:36216930). Interacts with the viral envelope glycoprotein; this interaction contributes to the virion assembly (Probable). Interacts with host RAE1-NUP98 complex (By similarity). Interacts with host NEDD4 and TSG101. Interacts with host dynamin (By similarity). Interacts with host NDUFAF4; the interaction inhibits viral propagation and is independent of interferon activation (By similarity). Interacts with host GTF2H5; the interaction may inhibit host transcription (By similarity).</text>
</comment>
<comment type="interaction">
    <interactant intactId="EBI-15693250">
        <id>P08325</id>
    </interactant>
    <interactant intactId="EBI-78756">
        <id>Q12906</id>
        <label>ILF3</label>
    </interactant>
    <organismsDiffer>true</organismsDiffer>
    <experiments>2</experiments>
</comment>
<comment type="subcellular location">
    <subcellularLocation>
        <location evidence="1">Virion</location>
    </subcellularLocation>
    <subcellularLocation>
        <location evidence="1">Host endomembrane system</location>
        <topology evidence="1">Peripheral membrane protein</topology>
    </subcellularLocation>
    <subcellularLocation>
        <location evidence="1">Host nucleus membrane</location>
        <topology evidence="1">Peripheral membrane protein</topology>
    </subcellularLocation>
    <subcellularLocation>
        <location evidence="1">Host nucleus</location>
    </subcellularLocation>
    <subcellularLocation>
        <location evidence="1">Host cytoplasm</location>
    </subcellularLocation>
    <text evidence="1">In the virion, forms a double layer around the helical nucleocapsid, the inner matrix layer binding to the N helix and the outer matrix layer binding to the envelope glycoprotein. About 2480 copies of M are present in the virion.</text>
</comment>
<comment type="alternative products">
    <event type="alternative initiation"/>
    <isoform>
        <id>P08325-1</id>
        <name>M</name>
        <sequence type="displayed"/>
    </isoform>
    <isoform>
        <id>P08325-2</id>
        <name>M2</name>
        <sequence type="described" ref="VSP_025423"/>
    </isoform>
    <isoform>
        <id>P08325-3</id>
        <name>M3</name>
        <sequence type="described" ref="VSP_025422"/>
    </isoform>
</comment>
<comment type="domain">
    <text evidence="1">Late-budding domains (L domains) are short sequence motifs essential for viral particle budding (By similarity). They recruit proteins of the host ESCRT machinery (Endosomal Sorting Complex Required for Transport) or ESCRT-associated proteins (By similarity). M contains two overlapping L domains: a PPXY motif which interacts with the WW domain 3 of NEDD4 and a PTAP/PSAP motif, which interacts with the UEV domain of TSG101 (By similarity).</text>
</comment>
<comment type="PTM">
    <text evidence="1">Phosphorylated by host.</text>
</comment>
<comment type="similarity">
    <text evidence="5">Belongs to the vesiculoviruses matrix protein family.</text>
</comment>
<proteinExistence type="evidence at protein level"/>
<feature type="chain" id="PRO_0000222856" description="Matrix protein">
    <location>
        <begin position="1"/>
        <end position="229"/>
    </location>
</feature>
<feature type="region of interest" description="Disordered" evidence="2">
    <location>
        <begin position="1"/>
        <end position="35"/>
    </location>
</feature>
<feature type="short sequence motif" description="dynamin binding" evidence="1">
    <location>
        <begin position="2"/>
        <end position="4"/>
    </location>
</feature>
<feature type="short sequence motif" description="PPXY motif" evidence="1">
    <location>
        <begin position="24"/>
        <end position="27"/>
    </location>
</feature>
<feature type="short sequence motif" description="PTAP/PSAP motif" evidence="1">
    <location>
        <begin position="37"/>
        <end position="40"/>
    </location>
</feature>
<feature type="compositionally biased region" description="Low complexity" evidence="2">
    <location>
        <begin position="1"/>
        <end position="12"/>
    </location>
</feature>
<feature type="splice variant" id="VSP_025422" description="In isoform M3." evidence="5">
    <location>
        <begin position="1"/>
        <end position="50"/>
    </location>
</feature>
<feature type="splice variant" id="VSP_025423" description="In isoform M2." evidence="5">
    <location>
        <begin position="1"/>
        <end position="32"/>
    </location>
</feature>
<feature type="mutagenesis site" description="Partial loss of cytopathicity." evidence="3">
    <original>M</original>
    <variation>R</variation>
    <location>
        <position position="48"/>
    </location>
</feature>
<feature type="mutagenesis site" description="Complete loss of cytopathicity." evidence="3">
    <original>M</original>
    <variation>R</variation>
    <location>
        <position position="51"/>
    </location>
</feature>
<feature type="turn" evidence="7">
    <location>
        <begin position="42"/>
        <end position="44"/>
    </location>
</feature>
<feature type="turn" evidence="7">
    <location>
        <begin position="49"/>
        <end position="51"/>
    </location>
</feature>
<feature type="strand" evidence="7">
    <location>
        <begin position="60"/>
        <end position="76"/>
    </location>
</feature>
<feature type="helix" evidence="7">
    <location>
        <begin position="81"/>
        <end position="88"/>
    </location>
</feature>
<feature type="helix" evidence="7">
    <location>
        <begin position="89"/>
        <end position="92"/>
    </location>
</feature>
<feature type="helix" evidence="7">
    <location>
        <begin position="99"/>
        <end position="101"/>
    </location>
</feature>
<feature type="helix" evidence="7">
    <location>
        <begin position="102"/>
        <end position="113"/>
    </location>
</feature>
<feature type="helix" evidence="7">
    <location>
        <begin position="121"/>
        <end position="124"/>
    </location>
</feature>
<feature type="strand" evidence="7">
    <location>
        <begin position="130"/>
        <end position="143"/>
    </location>
</feature>
<feature type="strand" evidence="7">
    <location>
        <begin position="156"/>
        <end position="163"/>
    </location>
</feature>
<feature type="strand" evidence="7">
    <location>
        <begin position="168"/>
        <end position="179"/>
    </location>
</feature>
<feature type="helix" evidence="7">
    <location>
        <begin position="189"/>
        <end position="192"/>
    </location>
</feature>
<feature type="helix" evidence="7">
    <location>
        <begin position="195"/>
        <end position="200"/>
    </location>
</feature>
<feature type="helix" evidence="7">
    <location>
        <begin position="201"/>
        <end position="207"/>
    </location>
</feature>
<feature type="strand" evidence="7">
    <location>
        <begin position="210"/>
        <end position="213"/>
    </location>
</feature>
<feature type="strand" evidence="7">
    <location>
        <begin position="215"/>
        <end position="219"/>
    </location>
</feature>
<feature type="strand" evidence="7">
    <location>
        <begin position="221"/>
        <end position="225"/>
    </location>
</feature>
<name>MATRX_VSNJO</name>
<dbReference type="EMBL" id="M14553">
    <property type="protein sequence ID" value="AAA48443.1"/>
    <property type="molecule type" value="mRNA"/>
</dbReference>
<dbReference type="PIR" id="A27254">
    <property type="entry name" value="MFVNVJ"/>
</dbReference>
<dbReference type="PDB" id="2W2R">
    <property type="method" value="X-ray"/>
    <property type="resolution" value="1.83 A"/>
    <property type="chains" value="A=2-229"/>
</dbReference>
<dbReference type="PDB" id="7UWS">
    <property type="method" value="EM"/>
    <property type="resolution" value="3.47 A"/>
    <property type="chains" value="J/K/L/M/N/O/P/Q/R/S/T/U=1-229"/>
</dbReference>
<dbReference type="PDBsum" id="2W2R"/>
<dbReference type="PDBsum" id="7UWS"/>
<dbReference type="SMR" id="P08325"/>
<dbReference type="IntAct" id="P08325">
    <property type="interactions" value="4"/>
</dbReference>
<dbReference type="EvolutionaryTrace" id="P08325"/>
<dbReference type="Proteomes" id="UP000007626">
    <property type="component" value="Genome"/>
</dbReference>
<dbReference type="GO" id="GO:0030430">
    <property type="term" value="C:host cell cytoplasm"/>
    <property type="evidence" value="ECO:0007669"/>
    <property type="project" value="UniProtKB-SubCell"/>
</dbReference>
<dbReference type="GO" id="GO:0044200">
    <property type="term" value="C:host cell nuclear membrane"/>
    <property type="evidence" value="ECO:0007669"/>
    <property type="project" value="UniProtKB-SubCell"/>
</dbReference>
<dbReference type="GO" id="GO:0016020">
    <property type="term" value="C:membrane"/>
    <property type="evidence" value="ECO:0007669"/>
    <property type="project" value="UniProtKB-KW"/>
</dbReference>
<dbReference type="GO" id="GO:0019031">
    <property type="term" value="C:viral envelope"/>
    <property type="evidence" value="ECO:0007669"/>
    <property type="project" value="InterPro"/>
</dbReference>
<dbReference type="GO" id="GO:0039660">
    <property type="term" value="F:structural constituent of virion"/>
    <property type="evidence" value="ECO:0007669"/>
    <property type="project" value="UniProtKB-KW"/>
</dbReference>
<dbReference type="GO" id="GO:0039522">
    <property type="term" value="P:symbiont-mediated suppression of host mRNA export from nucleus"/>
    <property type="evidence" value="ECO:0007669"/>
    <property type="project" value="UniProtKB-KW"/>
</dbReference>
<dbReference type="GO" id="GO:0039702">
    <property type="term" value="P:viral budding via host ESCRT complex"/>
    <property type="evidence" value="ECO:0007669"/>
    <property type="project" value="UniProtKB-KW"/>
</dbReference>
<dbReference type="Gene3D" id="3.10.460.10">
    <property type="entry name" value="VSV matrix protein"/>
    <property type="match status" value="1"/>
</dbReference>
<dbReference type="InterPro" id="IPR009397">
    <property type="entry name" value="Vesiculo_matrix"/>
</dbReference>
<dbReference type="InterPro" id="IPR036711">
    <property type="entry name" value="VSV_matrix_sf"/>
</dbReference>
<dbReference type="Pfam" id="PF06326">
    <property type="entry name" value="Vesiculo_matrix"/>
    <property type="match status" value="1"/>
</dbReference>
<dbReference type="SUPFAM" id="SSF75404">
    <property type="entry name" value="VSV matrix protein"/>
    <property type="match status" value="1"/>
</dbReference>
<sequence length="229" mass="26229">MSSFKKILGLSSKSHKKSKKMGLPPPYDESCPMETQPSAPLSNDFFGMEDMDLYDKDSLRYEKFRFMLKMTVRSNKPFRSYDDVTAAVSQWDNSYIGMVGKRPFYKIIAVIGSSHLQATPAVLADLNQPEYYATLTGRCFLPHRLGLIPPMFNVQETFRKPFNIGLYKGTLDFTFTVSDDESNEKVPHVWDYMNPKYQSQIQQEGLKFGLILSKKATGTWVLDQLSPFK</sequence>
<reference key="1">
    <citation type="journal article" date="1986" name="Virology">
        <title>Complete nucleotide sequence of the matrix protein mRNA of vesicular stomatitis virus (New Jersey serotype).</title>
        <authorList>
            <person name="Gill D.S."/>
            <person name="Banerjee A.K."/>
        </authorList>
    </citation>
    <scope>NUCLEOTIDE SEQUENCE [MRNA]</scope>
</reference>
<reference key="2">
    <citation type="journal article" date="2007" name="Virology">
        <title>Matrix protein of VSV New Jersey serotype containing methionine to arginine substitutions at positions 48 and 51 allows near-normal host cell gene expression.</title>
        <authorList>
            <person name="Kim G.N."/>
            <person name="Kang C.Y."/>
        </authorList>
    </citation>
    <scope>MUTAGENESIS OF MET-48 AND MET-51</scope>
    <source>
        <strain>Hazelhurst</strain>
    </source>
</reference>
<reference evidence="8" key="3">
    <citation type="journal article" date="2022" name="Nat. Commun.">
        <title>Atomic model of vesicular stomatitis virus and mechanism of assembly.</title>
        <authorList>
            <person name="Zhou K."/>
            <person name="Si Z."/>
            <person name="Ge P."/>
            <person name="Tsao J."/>
            <person name="Luo M."/>
            <person name="Zhou Z.H."/>
        </authorList>
    </citation>
    <scope>STRUCTURE BY ELECTRON MICROSCOPY (3.47 ANGSTROMS)</scope>
    <scope>INTERACTION WITH THE NUCLEOCAPSID PROTEIN</scope>
    <scope>SUBUNIT</scope>
    <scope>FUNCTION</scope>
    <scope>INTERACTION WITH THE GLYCOPROTEIN</scope>
</reference>
<keyword id="KW-0002">3D-structure</keyword>
<keyword id="KW-0024">Alternative initiation</keyword>
<keyword id="KW-0053">Apoptosis</keyword>
<keyword id="KW-1262">Eukaryotic host gene expression shutoff by virus</keyword>
<keyword id="KW-1035">Host cytoplasm</keyword>
<keyword id="KW-1190">Host gene expression shutoff by virus</keyword>
<keyword id="KW-1043">Host membrane</keyword>
<keyword id="KW-1192">Host mRNA suppression by virus</keyword>
<keyword id="KW-1048">Host nucleus</keyword>
<keyword id="KW-0945">Host-virus interaction</keyword>
<keyword id="KW-1099">Inhibition of host mRNA nuclear export by virus</keyword>
<keyword id="KW-0472">Membrane</keyword>
<keyword id="KW-0597">Phosphoprotein</keyword>
<keyword id="KW-1185">Reference proteome</keyword>
<keyword id="KW-1198">Viral budding</keyword>
<keyword id="KW-1187">Viral budding via the host ESCRT complexes</keyword>
<keyword id="KW-0468">Viral matrix protein</keyword>
<keyword id="KW-1188">Viral release from host cell</keyword>
<keyword id="KW-0946">Virion</keyword>
<organism>
    <name type="scientific">Vesicular stomatitis New Jersey virus (strain Ogden subtype Concan)</name>
    <name type="common">VSNJV</name>
    <dbReference type="NCBI Taxonomy" id="11283"/>
    <lineage>
        <taxon>Viruses</taxon>
        <taxon>Riboviria</taxon>
        <taxon>Orthornavirae</taxon>
        <taxon>Negarnaviricota</taxon>
        <taxon>Haploviricotina</taxon>
        <taxon>Monjiviricetes</taxon>
        <taxon>Mononegavirales</taxon>
        <taxon>Rhabdoviridae</taxon>
        <taxon>Alpharhabdovirinae</taxon>
        <taxon>Vesiculovirus</taxon>
        <taxon>Vesiculovirus newjersey</taxon>
    </lineage>
</organism>
<evidence type="ECO:0000250" key="1">
    <source>
        <dbReference type="UniProtKB" id="P03519"/>
    </source>
</evidence>
<evidence type="ECO:0000256" key="2">
    <source>
        <dbReference type="SAM" id="MobiDB-lite"/>
    </source>
</evidence>
<evidence type="ECO:0000269" key="3">
    <source>
    </source>
</evidence>
<evidence type="ECO:0000269" key="4">
    <source>
    </source>
</evidence>
<evidence type="ECO:0000305" key="5"/>
<evidence type="ECO:0000305" key="6">
    <source>
    </source>
</evidence>
<evidence type="ECO:0007829" key="7">
    <source>
        <dbReference type="PDB" id="2W2R"/>
    </source>
</evidence>
<evidence type="ECO:0007829" key="8">
    <source>
        <dbReference type="PDB" id="7UWS"/>
    </source>
</evidence>